<organism>
    <name type="scientific">Bacillus cereus (strain ATCC 10987 / NRS 248)</name>
    <dbReference type="NCBI Taxonomy" id="222523"/>
    <lineage>
        <taxon>Bacteria</taxon>
        <taxon>Bacillati</taxon>
        <taxon>Bacillota</taxon>
        <taxon>Bacilli</taxon>
        <taxon>Bacillales</taxon>
        <taxon>Bacillaceae</taxon>
        <taxon>Bacillus</taxon>
        <taxon>Bacillus cereus group</taxon>
    </lineage>
</organism>
<accession>P61462</accession>
<sequence length="79" mass="9138">MLSHELVERINFLAKKAKAEGLTEEEQRERQSLREQYLKGFRQNMLNELKGIKVVNEQGTDVTPAKLKALKKQDNAKLN</sequence>
<protein>
    <recommendedName>
        <fullName evidence="1">UPF0291 protein BCE_3725</fullName>
    </recommendedName>
</protein>
<feature type="chain" id="PRO_0000094955" description="UPF0291 protein BCE_3725">
    <location>
        <begin position="1"/>
        <end position="79"/>
    </location>
</feature>
<dbReference type="EMBL" id="AE017194">
    <property type="protein sequence ID" value="AAS42630.1"/>
    <property type="molecule type" value="Genomic_DNA"/>
</dbReference>
<dbReference type="SMR" id="P61462"/>
<dbReference type="KEGG" id="bca:BCE_3725"/>
<dbReference type="HOGENOM" id="CLU_173137_0_2_9"/>
<dbReference type="Proteomes" id="UP000002527">
    <property type="component" value="Chromosome"/>
</dbReference>
<dbReference type="GO" id="GO:0005737">
    <property type="term" value="C:cytoplasm"/>
    <property type="evidence" value="ECO:0007669"/>
    <property type="project" value="UniProtKB-SubCell"/>
</dbReference>
<dbReference type="Gene3D" id="1.10.287.540">
    <property type="entry name" value="Helix hairpin bin"/>
    <property type="match status" value="1"/>
</dbReference>
<dbReference type="HAMAP" id="MF_01103">
    <property type="entry name" value="UPF0291"/>
    <property type="match status" value="1"/>
</dbReference>
<dbReference type="InterPro" id="IPR009242">
    <property type="entry name" value="DUF896"/>
</dbReference>
<dbReference type="NCBIfam" id="NF002422">
    <property type="entry name" value="PRK01546.1"/>
    <property type="match status" value="1"/>
</dbReference>
<dbReference type="PANTHER" id="PTHR37300">
    <property type="entry name" value="UPF0291 PROTEIN CBO2609/CLC_2481"/>
    <property type="match status" value="1"/>
</dbReference>
<dbReference type="PANTHER" id="PTHR37300:SF1">
    <property type="entry name" value="UPF0291 PROTEIN YNZC"/>
    <property type="match status" value="1"/>
</dbReference>
<dbReference type="Pfam" id="PF05979">
    <property type="entry name" value="DUF896"/>
    <property type="match status" value="1"/>
</dbReference>
<dbReference type="SUPFAM" id="SSF158221">
    <property type="entry name" value="YnzC-like"/>
    <property type="match status" value="1"/>
</dbReference>
<keyword id="KW-0963">Cytoplasm</keyword>
<comment type="subcellular location">
    <subcellularLocation>
        <location evidence="1">Cytoplasm</location>
    </subcellularLocation>
</comment>
<comment type="similarity">
    <text evidence="1">Belongs to the UPF0291 family.</text>
</comment>
<evidence type="ECO:0000255" key="1">
    <source>
        <dbReference type="HAMAP-Rule" id="MF_01103"/>
    </source>
</evidence>
<name>Y3725_BACC1</name>
<gene>
    <name type="ordered locus">BCE_3725</name>
</gene>
<reference key="1">
    <citation type="journal article" date="2004" name="Nucleic Acids Res.">
        <title>The genome sequence of Bacillus cereus ATCC 10987 reveals metabolic adaptations and a large plasmid related to Bacillus anthracis pXO1.</title>
        <authorList>
            <person name="Rasko D.A."/>
            <person name="Ravel J."/>
            <person name="Oekstad O.A."/>
            <person name="Helgason E."/>
            <person name="Cer R.Z."/>
            <person name="Jiang L."/>
            <person name="Shores K.A."/>
            <person name="Fouts D.E."/>
            <person name="Tourasse N.J."/>
            <person name="Angiuoli S.V."/>
            <person name="Kolonay J.F."/>
            <person name="Nelson W.C."/>
            <person name="Kolstoe A.-B."/>
            <person name="Fraser C.M."/>
            <person name="Read T.D."/>
        </authorList>
    </citation>
    <scope>NUCLEOTIDE SEQUENCE [LARGE SCALE GENOMIC DNA]</scope>
    <source>
        <strain>ATCC 10987 / NRS 248</strain>
    </source>
</reference>
<proteinExistence type="inferred from homology"/>